<evidence type="ECO:0000250" key="1"/>
<evidence type="ECO:0000255" key="2">
    <source>
        <dbReference type="HAMAP-Rule" id="MF_03125"/>
    </source>
</evidence>
<evidence type="ECO:0000305" key="3"/>
<keyword id="KW-0150">Chloroplast</keyword>
<keyword id="KW-0342">GTP-binding</keyword>
<keyword id="KW-0436">Ligase</keyword>
<keyword id="KW-0460">Magnesium</keyword>
<keyword id="KW-0479">Metal-binding</keyword>
<keyword id="KW-0547">Nucleotide-binding</keyword>
<keyword id="KW-0934">Plastid</keyword>
<keyword id="KW-0658">Purine biosynthesis</keyword>
<keyword id="KW-1185">Reference proteome</keyword>
<keyword id="KW-0809">Transit peptide</keyword>
<proteinExistence type="evidence at transcript level"/>
<gene>
    <name evidence="2" type="primary">PURA1</name>
    <name type="ordered locus">Os03g0174500</name>
    <name type="ordered locus">LOC_Os03g07840</name>
    <name type="ORF">OsJ_09613</name>
</gene>
<feature type="transit peptide" description="Chloroplast" evidence="2">
    <location>
        <begin position="1"/>
        <end position="47"/>
    </location>
</feature>
<feature type="chain" id="PRO_0000399276" description="Adenylosuccinate synthetase 1, chloroplastic">
    <location>
        <begin position="48"/>
        <end position="488"/>
    </location>
</feature>
<feature type="active site" description="Proton acceptor" evidence="2">
    <location>
        <position position="76"/>
    </location>
</feature>
<feature type="active site" description="Proton donor" evidence="2">
    <location>
        <position position="104"/>
    </location>
</feature>
<feature type="binding site" evidence="2">
    <location>
        <begin position="75"/>
        <end position="81"/>
    </location>
    <ligand>
        <name>GTP</name>
        <dbReference type="ChEBI" id="CHEBI:37565"/>
    </ligand>
</feature>
<feature type="binding site" description="in other chain" evidence="2">
    <location>
        <begin position="76"/>
        <end position="79"/>
    </location>
    <ligand>
        <name>IMP</name>
        <dbReference type="ChEBI" id="CHEBI:58053"/>
        <note>ligand shared between dimeric partners</note>
    </ligand>
</feature>
<feature type="binding site" evidence="2">
    <location>
        <position position="76"/>
    </location>
    <ligand>
        <name>Mg(2+)</name>
        <dbReference type="ChEBI" id="CHEBI:18420"/>
    </ligand>
</feature>
<feature type="binding site" description="in other chain" evidence="2">
    <location>
        <begin position="101"/>
        <end position="104"/>
    </location>
    <ligand>
        <name>IMP</name>
        <dbReference type="ChEBI" id="CHEBI:58053"/>
        <note>ligand shared between dimeric partners</note>
    </ligand>
</feature>
<feature type="binding site" evidence="2">
    <location>
        <begin position="103"/>
        <end position="105"/>
    </location>
    <ligand>
        <name>GTP</name>
        <dbReference type="ChEBI" id="CHEBI:37565"/>
    </ligand>
</feature>
<feature type="binding site" evidence="2">
    <location>
        <position position="103"/>
    </location>
    <ligand>
        <name>Mg(2+)</name>
        <dbReference type="ChEBI" id="CHEBI:18420"/>
    </ligand>
</feature>
<feature type="binding site" description="in other chain" evidence="2">
    <location>
        <position position="193"/>
    </location>
    <ligand>
        <name>IMP</name>
        <dbReference type="ChEBI" id="CHEBI:58053"/>
        <note>ligand shared between dimeric partners</note>
    </ligand>
</feature>
<feature type="binding site" evidence="2">
    <location>
        <position position="207"/>
    </location>
    <ligand>
        <name>IMP</name>
        <dbReference type="ChEBI" id="CHEBI:58053"/>
        <note>ligand shared between dimeric partners</note>
    </ligand>
</feature>
<feature type="binding site" description="in other chain" evidence="2">
    <location>
        <position position="287"/>
    </location>
    <ligand>
        <name>IMP</name>
        <dbReference type="ChEBI" id="CHEBI:58053"/>
        <note>ligand shared between dimeric partners</note>
    </ligand>
</feature>
<feature type="binding site" description="in other chain" evidence="2">
    <location>
        <position position="302"/>
    </location>
    <ligand>
        <name>IMP</name>
        <dbReference type="ChEBI" id="CHEBI:58053"/>
        <note>ligand shared between dimeric partners</note>
    </ligand>
</feature>
<feature type="binding site" evidence="2">
    <location>
        <begin position="362"/>
        <end position="368"/>
    </location>
    <ligand>
        <name>substrate</name>
    </ligand>
</feature>
<feature type="binding site" description="in other chain" evidence="2">
    <location>
        <position position="366"/>
    </location>
    <ligand>
        <name>IMP</name>
        <dbReference type="ChEBI" id="CHEBI:58053"/>
        <note>ligand shared between dimeric partners</note>
    </ligand>
</feature>
<feature type="binding site" evidence="2">
    <location>
        <position position="368"/>
    </location>
    <ligand>
        <name>GTP</name>
        <dbReference type="ChEBI" id="CHEBI:37565"/>
    </ligand>
</feature>
<feature type="binding site" evidence="2">
    <location>
        <begin position="394"/>
        <end position="396"/>
    </location>
    <ligand>
        <name>GTP</name>
        <dbReference type="ChEBI" id="CHEBI:37565"/>
    </ligand>
</feature>
<feature type="binding site" evidence="2">
    <location>
        <begin position="477"/>
        <end position="479"/>
    </location>
    <ligand>
        <name>GTP</name>
        <dbReference type="ChEBI" id="CHEBI:37565"/>
    </ligand>
</feature>
<protein>
    <recommendedName>
        <fullName evidence="2">Adenylosuccinate synthetase 1, chloroplastic</fullName>
        <shortName evidence="2">AMPSase 1</shortName>
        <shortName evidence="2">AdSS 1</shortName>
        <ecNumber evidence="2">6.3.4.4</ecNumber>
    </recommendedName>
    <alternativeName>
        <fullName evidence="2">IMP--aspartate ligase 1</fullName>
    </alternativeName>
</protein>
<accession>Q10R17</accession>
<accession>A3AEN4</accession>
<reference key="1">
    <citation type="journal article" date="2005" name="Genome Res.">
        <title>Sequence, annotation, and analysis of synteny between rice chromosome 3 and diverged grass species.</title>
        <authorList>
            <consortium name="The rice chromosome 3 sequencing consortium"/>
            <person name="Buell C.R."/>
            <person name="Yuan Q."/>
            <person name="Ouyang S."/>
            <person name="Liu J."/>
            <person name="Zhu W."/>
            <person name="Wang A."/>
            <person name="Maiti R."/>
            <person name="Haas B."/>
            <person name="Wortman J."/>
            <person name="Pertea M."/>
            <person name="Jones K.M."/>
            <person name="Kim M."/>
            <person name="Overton L."/>
            <person name="Tsitrin T."/>
            <person name="Fadrosh D."/>
            <person name="Bera J."/>
            <person name="Weaver B."/>
            <person name="Jin S."/>
            <person name="Johri S."/>
            <person name="Reardon M."/>
            <person name="Webb K."/>
            <person name="Hill J."/>
            <person name="Moffat K."/>
            <person name="Tallon L."/>
            <person name="Van Aken S."/>
            <person name="Lewis M."/>
            <person name="Utterback T."/>
            <person name="Feldblyum T."/>
            <person name="Zismann V."/>
            <person name="Iobst S."/>
            <person name="Hsiao J."/>
            <person name="de Vazeille A.R."/>
            <person name="Salzberg S.L."/>
            <person name="White O."/>
            <person name="Fraser C.M."/>
            <person name="Yu Y."/>
            <person name="Kim H."/>
            <person name="Rambo T."/>
            <person name="Currie J."/>
            <person name="Collura K."/>
            <person name="Kernodle-Thompson S."/>
            <person name="Wei F."/>
            <person name="Kudrna K."/>
            <person name="Ammiraju J.S.S."/>
            <person name="Luo M."/>
            <person name="Goicoechea J.L."/>
            <person name="Wing R.A."/>
            <person name="Henry D."/>
            <person name="Oates R."/>
            <person name="Palmer M."/>
            <person name="Pries G."/>
            <person name="Saski C."/>
            <person name="Simmons J."/>
            <person name="Soderlund C."/>
            <person name="Nelson W."/>
            <person name="de la Bastide M."/>
            <person name="Spiegel L."/>
            <person name="Nascimento L."/>
            <person name="Huang E."/>
            <person name="Preston R."/>
            <person name="Zutavern T."/>
            <person name="Palmer L."/>
            <person name="O'Shaughnessy A."/>
            <person name="Dike S."/>
            <person name="McCombie W.R."/>
            <person name="Minx P."/>
            <person name="Cordum H."/>
            <person name="Wilson R."/>
            <person name="Jin W."/>
            <person name="Lee H.R."/>
            <person name="Jiang J."/>
            <person name="Jackson S."/>
        </authorList>
    </citation>
    <scope>NUCLEOTIDE SEQUENCE [LARGE SCALE GENOMIC DNA]</scope>
    <source>
        <strain>cv. Nipponbare</strain>
    </source>
</reference>
<reference key="2">
    <citation type="journal article" date="2005" name="Nature">
        <title>The map-based sequence of the rice genome.</title>
        <authorList>
            <consortium name="International rice genome sequencing project (IRGSP)"/>
        </authorList>
    </citation>
    <scope>NUCLEOTIDE SEQUENCE [LARGE SCALE GENOMIC DNA]</scope>
    <source>
        <strain>cv. Nipponbare</strain>
    </source>
</reference>
<reference key="3">
    <citation type="journal article" date="2008" name="Nucleic Acids Res.">
        <title>The rice annotation project database (RAP-DB): 2008 update.</title>
        <authorList>
            <consortium name="The rice annotation project (RAP)"/>
        </authorList>
    </citation>
    <scope>GENOME REANNOTATION</scope>
    <source>
        <strain>cv. Nipponbare</strain>
    </source>
</reference>
<reference key="4">
    <citation type="journal article" date="2013" name="Rice">
        <title>Improvement of the Oryza sativa Nipponbare reference genome using next generation sequence and optical map data.</title>
        <authorList>
            <person name="Kawahara Y."/>
            <person name="de la Bastide M."/>
            <person name="Hamilton J.P."/>
            <person name="Kanamori H."/>
            <person name="McCombie W.R."/>
            <person name="Ouyang S."/>
            <person name="Schwartz D.C."/>
            <person name="Tanaka T."/>
            <person name="Wu J."/>
            <person name="Zhou S."/>
            <person name="Childs K.L."/>
            <person name="Davidson R.M."/>
            <person name="Lin H."/>
            <person name="Quesada-Ocampo L."/>
            <person name="Vaillancourt B."/>
            <person name="Sakai H."/>
            <person name="Lee S.S."/>
            <person name="Kim J."/>
            <person name="Numa H."/>
            <person name="Itoh T."/>
            <person name="Buell C.R."/>
            <person name="Matsumoto T."/>
        </authorList>
    </citation>
    <scope>GENOME REANNOTATION</scope>
    <source>
        <strain>cv. Nipponbare</strain>
    </source>
</reference>
<reference key="5">
    <citation type="journal article" date="2005" name="PLoS Biol.">
        <title>The genomes of Oryza sativa: a history of duplications.</title>
        <authorList>
            <person name="Yu J."/>
            <person name="Wang J."/>
            <person name="Lin W."/>
            <person name="Li S."/>
            <person name="Li H."/>
            <person name="Zhou J."/>
            <person name="Ni P."/>
            <person name="Dong W."/>
            <person name="Hu S."/>
            <person name="Zeng C."/>
            <person name="Zhang J."/>
            <person name="Zhang Y."/>
            <person name="Li R."/>
            <person name="Xu Z."/>
            <person name="Li S."/>
            <person name="Li X."/>
            <person name="Zheng H."/>
            <person name="Cong L."/>
            <person name="Lin L."/>
            <person name="Yin J."/>
            <person name="Geng J."/>
            <person name="Li G."/>
            <person name="Shi J."/>
            <person name="Liu J."/>
            <person name="Lv H."/>
            <person name="Li J."/>
            <person name="Wang J."/>
            <person name="Deng Y."/>
            <person name="Ran L."/>
            <person name="Shi X."/>
            <person name="Wang X."/>
            <person name="Wu Q."/>
            <person name="Li C."/>
            <person name="Ren X."/>
            <person name="Wang J."/>
            <person name="Wang X."/>
            <person name="Li D."/>
            <person name="Liu D."/>
            <person name="Zhang X."/>
            <person name="Ji Z."/>
            <person name="Zhao W."/>
            <person name="Sun Y."/>
            <person name="Zhang Z."/>
            <person name="Bao J."/>
            <person name="Han Y."/>
            <person name="Dong L."/>
            <person name="Ji J."/>
            <person name="Chen P."/>
            <person name="Wu S."/>
            <person name="Liu J."/>
            <person name="Xiao Y."/>
            <person name="Bu D."/>
            <person name="Tan J."/>
            <person name="Yang L."/>
            <person name="Ye C."/>
            <person name="Zhang J."/>
            <person name="Xu J."/>
            <person name="Zhou Y."/>
            <person name="Yu Y."/>
            <person name="Zhang B."/>
            <person name="Zhuang S."/>
            <person name="Wei H."/>
            <person name="Liu B."/>
            <person name="Lei M."/>
            <person name="Yu H."/>
            <person name="Li Y."/>
            <person name="Xu H."/>
            <person name="Wei S."/>
            <person name="He X."/>
            <person name="Fang L."/>
            <person name="Zhang Z."/>
            <person name="Zhang Y."/>
            <person name="Huang X."/>
            <person name="Su Z."/>
            <person name="Tong W."/>
            <person name="Li J."/>
            <person name="Tong Z."/>
            <person name="Li S."/>
            <person name="Ye J."/>
            <person name="Wang L."/>
            <person name="Fang L."/>
            <person name="Lei T."/>
            <person name="Chen C.-S."/>
            <person name="Chen H.-C."/>
            <person name="Xu Z."/>
            <person name="Li H."/>
            <person name="Huang H."/>
            <person name="Zhang F."/>
            <person name="Xu H."/>
            <person name="Li N."/>
            <person name="Zhao C."/>
            <person name="Li S."/>
            <person name="Dong L."/>
            <person name="Huang Y."/>
            <person name="Li L."/>
            <person name="Xi Y."/>
            <person name="Qi Q."/>
            <person name="Li W."/>
            <person name="Zhang B."/>
            <person name="Hu W."/>
            <person name="Zhang Y."/>
            <person name="Tian X."/>
            <person name="Jiao Y."/>
            <person name="Liang X."/>
            <person name="Jin J."/>
            <person name="Gao L."/>
            <person name="Zheng W."/>
            <person name="Hao B."/>
            <person name="Liu S.-M."/>
            <person name="Wang W."/>
            <person name="Yuan L."/>
            <person name="Cao M."/>
            <person name="McDermott J."/>
            <person name="Samudrala R."/>
            <person name="Wang J."/>
            <person name="Wong G.K.-S."/>
            <person name="Yang H."/>
        </authorList>
    </citation>
    <scope>NUCLEOTIDE SEQUENCE [LARGE SCALE GENOMIC DNA]</scope>
    <source>
        <strain>cv. Nipponbare</strain>
    </source>
</reference>
<reference key="6">
    <citation type="journal article" date="2003" name="Science">
        <title>Collection, mapping, and annotation of over 28,000 cDNA clones from japonica rice.</title>
        <authorList>
            <consortium name="The rice full-length cDNA consortium"/>
        </authorList>
    </citation>
    <scope>NUCLEOTIDE SEQUENCE [LARGE SCALE MRNA]</scope>
    <source>
        <strain>cv. Nipponbare</strain>
    </source>
</reference>
<comment type="function">
    <text evidence="1">Plays an important role in the de novo pathway and in the salvage pathway of purine nucleotide biosynthesis. Catalyzes the first committed step in the biosynthesis of AMP from IMP (By similarity).</text>
</comment>
<comment type="catalytic activity">
    <reaction evidence="2">
        <text>IMP + L-aspartate + GTP = N(6)-(1,2-dicarboxyethyl)-AMP + GDP + phosphate + 2 H(+)</text>
        <dbReference type="Rhea" id="RHEA:15753"/>
        <dbReference type="ChEBI" id="CHEBI:15378"/>
        <dbReference type="ChEBI" id="CHEBI:29991"/>
        <dbReference type="ChEBI" id="CHEBI:37565"/>
        <dbReference type="ChEBI" id="CHEBI:43474"/>
        <dbReference type="ChEBI" id="CHEBI:57567"/>
        <dbReference type="ChEBI" id="CHEBI:58053"/>
        <dbReference type="ChEBI" id="CHEBI:58189"/>
        <dbReference type="EC" id="6.3.4.4"/>
    </reaction>
</comment>
<comment type="cofactor">
    <cofactor evidence="2">
        <name>Mg(2+)</name>
        <dbReference type="ChEBI" id="CHEBI:18420"/>
    </cofactor>
    <text evidence="2">Binds 1 Mg(2+) ion per subunit.</text>
</comment>
<comment type="pathway">
    <text evidence="2">Purine metabolism; AMP biosynthesis via de novo pathway; AMP from IMP: step 1/2.</text>
</comment>
<comment type="subunit">
    <text evidence="2">Homodimer.</text>
</comment>
<comment type="subcellular location">
    <subcellularLocation>
        <location evidence="2">Plastid</location>
        <location evidence="2">Chloroplast</location>
    </subcellularLocation>
</comment>
<comment type="similarity">
    <text evidence="2">Belongs to the adenylosuccinate synthetase family.</text>
</comment>
<comment type="sequence caution" evidence="3">
    <conflict type="erroneous gene model prediction">
        <sequence resource="EMBL-CDS" id="EAZ25773"/>
    </conflict>
</comment>
<organism>
    <name type="scientific">Oryza sativa subsp. japonica</name>
    <name type="common">Rice</name>
    <dbReference type="NCBI Taxonomy" id="39947"/>
    <lineage>
        <taxon>Eukaryota</taxon>
        <taxon>Viridiplantae</taxon>
        <taxon>Streptophyta</taxon>
        <taxon>Embryophyta</taxon>
        <taxon>Tracheophyta</taxon>
        <taxon>Spermatophyta</taxon>
        <taxon>Magnoliopsida</taxon>
        <taxon>Liliopsida</taxon>
        <taxon>Poales</taxon>
        <taxon>Poaceae</taxon>
        <taxon>BOP clade</taxon>
        <taxon>Oryzoideae</taxon>
        <taxon>Oryzeae</taxon>
        <taxon>Oryzinae</taxon>
        <taxon>Oryza</taxon>
        <taxon>Oryza sativa</taxon>
    </lineage>
</organism>
<name>PURA1_ORYSJ</name>
<sequence>MSLSTVNHAAAAAAAAAGPGKSFSAAAPAAPSVRLPRTRAPAAAAVSAAAVGADRAADRVSALSQVSGVLGSQWGDEGKGKLVDVLAPRFDIVARCQGGANAGHTIYNSEGKKFALHLVPSGILHEGTLCVVGNGAVIHVPGFFNEIDGLESNGVNCNGRILVSDRAHLLFDLHQAVDGLREAELANSFIGTTKRGIGPCYSSKVTRNGLRVCDLRHMDTFGDKLDVLFKDATSRFEGFEYSKSMLREEVERYKRFAERLEPFIADTVHLLNESIQQKKKILVEGGQATMLDIDFGTYPFVTSSSPSAGGICTGLGIAPRCIGDLIGVVKAYTTRVGSGPFPTELFGEEGDLLRKSGMEFGTTTGRPRRCGWLDIVALKYCCEINGFSSLNLTKLDVLSGLPEVKLGVSYNQPDGQKLQSFPGDLDTLEQVQVKYEVLPGWQSDISSVRSYSELPLAAQRYVERIEELVGVPVHYIGVGPGRDALIYK</sequence>
<dbReference type="EC" id="6.3.4.4" evidence="2"/>
<dbReference type="EMBL" id="DP000009">
    <property type="protein sequence ID" value="ABF94252.1"/>
    <property type="molecule type" value="Genomic_DNA"/>
</dbReference>
<dbReference type="EMBL" id="AP008209">
    <property type="protein sequence ID" value="BAF11042.1"/>
    <property type="molecule type" value="Genomic_DNA"/>
</dbReference>
<dbReference type="EMBL" id="AP014959">
    <property type="protein sequence ID" value="BAS82565.1"/>
    <property type="molecule type" value="Genomic_DNA"/>
</dbReference>
<dbReference type="EMBL" id="CM000140">
    <property type="protein sequence ID" value="EAZ25773.1"/>
    <property type="status" value="ALT_SEQ"/>
    <property type="molecule type" value="Genomic_DNA"/>
</dbReference>
<dbReference type="EMBL" id="AK066881">
    <property type="protein sequence ID" value="BAG90164.1"/>
    <property type="molecule type" value="mRNA"/>
</dbReference>
<dbReference type="RefSeq" id="XP_015631824.1">
    <property type="nucleotide sequence ID" value="XM_015776338.1"/>
</dbReference>
<dbReference type="SMR" id="Q10R17"/>
<dbReference type="FunCoup" id="Q10R17">
    <property type="interactions" value="2655"/>
</dbReference>
<dbReference type="STRING" id="39947.Q10R17"/>
<dbReference type="iPTMnet" id="Q10R17"/>
<dbReference type="PaxDb" id="39947-Q10R17"/>
<dbReference type="EnsemblPlants" id="Os03t0174500-01">
    <property type="protein sequence ID" value="Os03t0174500-01"/>
    <property type="gene ID" value="Os03g0174500"/>
</dbReference>
<dbReference type="Gramene" id="Os03t0174500-01">
    <property type="protein sequence ID" value="Os03t0174500-01"/>
    <property type="gene ID" value="Os03g0174500"/>
</dbReference>
<dbReference type="KEGG" id="dosa:Os03g0174500"/>
<dbReference type="eggNOG" id="KOG1355">
    <property type="taxonomic scope" value="Eukaryota"/>
</dbReference>
<dbReference type="HOGENOM" id="CLU_029848_0_0_1"/>
<dbReference type="InParanoid" id="Q10R17"/>
<dbReference type="OMA" id="FHHAKPI"/>
<dbReference type="OrthoDB" id="10265645at2759"/>
<dbReference type="UniPathway" id="UPA00075">
    <property type="reaction ID" value="UER00335"/>
</dbReference>
<dbReference type="Proteomes" id="UP000000763">
    <property type="component" value="Chromosome 3"/>
</dbReference>
<dbReference type="Proteomes" id="UP000007752">
    <property type="component" value="Chromosome 3"/>
</dbReference>
<dbReference type="Proteomes" id="UP000059680">
    <property type="component" value="Chromosome 3"/>
</dbReference>
<dbReference type="ExpressionAtlas" id="Q10R17">
    <property type="expression patterns" value="baseline and differential"/>
</dbReference>
<dbReference type="GO" id="GO:0009507">
    <property type="term" value="C:chloroplast"/>
    <property type="evidence" value="ECO:0007669"/>
    <property type="project" value="UniProtKB-SubCell"/>
</dbReference>
<dbReference type="GO" id="GO:0005737">
    <property type="term" value="C:cytoplasm"/>
    <property type="evidence" value="ECO:0000318"/>
    <property type="project" value="GO_Central"/>
</dbReference>
<dbReference type="GO" id="GO:0004019">
    <property type="term" value="F:adenylosuccinate synthase activity"/>
    <property type="evidence" value="ECO:0000318"/>
    <property type="project" value="GO_Central"/>
</dbReference>
<dbReference type="GO" id="GO:0005525">
    <property type="term" value="F:GTP binding"/>
    <property type="evidence" value="ECO:0007669"/>
    <property type="project" value="UniProtKB-UniRule"/>
</dbReference>
<dbReference type="GO" id="GO:0000287">
    <property type="term" value="F:magnesium ion binding"/>
    <property type="evidence" value="ECO:0007669"/>
    <property type="project" value="UniProtKB-UniRule"/>
</dbReference>
<dbReference type="GO" id="GO:0044208">
    <property type="term" value="P:'de novo' AMP biosynthetic process"/>
    <property type="evidence" value="ECO:0000318"/>
    <property type="project" value="GO_Central"/>
</dbReference>
<dbReference type="GO" id="GO:0046040">
    <property type="term" value="P:IMP metabolic process"/>
    <property type="evidence" value="ECO:0000318"/>
    <property type="project" value="GO_Central"/>
</dbReference>
<dbReference type="CDD" id="cd03108">
    <property type="entry name" value="AdSS"/>
    <property type="match status" value="1"/>
</dbReference>
<dbReference type="FunFam" id="3.90.170.10:FF:000001">
    <property type="entry name" value="Adenylosuccinate synthetase"/>
    <property type="match status" value="1"/>
</dbReference>
<dbReference type="FunFam" id="1.10.300.10:FF:000002">
    <property type="entry name" value="Adenylosuccinate synthetase, chloroplastic"/>
    <property type="match status" value="1"/>
</dbReference>
<dbReference type="Gene3D" id="3.40.440.10">
    <property type="entry name" value="Adenylosuccinate Synthetase, subunit A, domain 1"/>
    <property type="match status" value="1"/>
</dbReference>
<dbReference type="Gene3D" id="1.10.300.10">
    <property type="entry name" value="Adenylosuccinate Synthetase, subunit A, domain 2"/>
    <property type="match status" value="1"/>
</dbReference>
<dbReference type="Gene3D" id="3.90.170.10">
    <property type="entry name" value="Adenylosuccinate Synthetase, subunit A, domain 3"/>
    <property type="match status" value="1"/>
</dbReference>
<dbReference type="HAMAP" id="MF_00011">
    <property type="entry name" value="Adenylosucc_synth"/>
    <property type="match status" value="1"/>
</dbReference>
<dbReference type="InterPro" id="IPR018220">
    <property type="entry name" value="Adenylosuccin_syn_GTP-bd"/>
</dbReference>
<dbReference type="InterPro" id="IPR033128">
    <property type="entry name" value="Adenylosuccin_syn_Lys_AS"/>
</dbReference>
<dbReference type="InterPro" id="IPR042109">
    <property type="entry name" value="Adenylosuccinate_synth_dom1"/>
</dbReference>
<dbReference type="InterPro" id="IPR042110">
    <property type="entry name" value="Adenylosuccinate_synth_dom2"/>
</dbReference>
<dbReference type="InterPro" id="IPR042111">
    <property type="entry name" value="Adenylosuccinate_synth_dom3"/>
</dbReference>
<dbReference type="InterPro" id="IPR001114">
    <property type="entry name" value="Adenylosuccinate_synthetase"/>
</dbReference>
<dbReference type="InterPro" id="IPR027417">
    <property type="entry name" value="P-loop_NTPase"/>
</dbReference>
<dbReference type="NCBIfam" id="NF002223">
    <property type="entry name" value="PRK01117.1"/>
    <property type="match status" value="1"/>
</dbReference>
<dbReference type="NCBIfam" id="TIGR00184">
    <property type="entry name" value="purA"/>
    <property type="match status" value="1"/>
</dbReference>
<dbReference type="PANTHER" id="PTHR11846">
    <property type="entry name" value="ADENYLOSUCCINATE SYNTHETASE"/>
    <property type="match status" value="1"/>
</dbReference>
<dbReference type="PANTHER" id="PTHR11846:SF19">
    <property type="entry name" value="ADENYLOSUCCINATE SYNTHETASE 1, CHLOROPLASTIC"/>
    <property type="match status" value="1"/>
</dbReference>
<dbReference type="Pfam" id="PF00709">
    <property type="entry name" value="Adenylsucc_synt"/>
    <property type="match status" value="1"/>
</dbReference>
<dbReference type="SMART" id="SM00788">
    <property type="entry name" value="Adenylsucc_synt"/>
    <property type="match status" value="1"/>
</dbReference>
<dbReference type="SUPFAM" id="SSF52540">
    <property type="entry name" value="P-loop containing nucleoside triphosphate hydrolases"/>
    <property type="match status" value="1"/>
</dbReference>
<dbReference type="PROSITE" id="PS01266">
    <property type="entry name" value="ADENYLOSUCCIN_SYN_1"/>
    <property type="match status" value="1"/>
</dbReference>
<dbReference type="PROSITE" id="PS00513">
    <property type="entry name" value="ADENYLOSUCCIN_SYN_2"/>
    <property type="match status" value="1"/>
</dbReference>